<keyword id="KW-0560">Oxidoreductase</keyword>
<keyword id="KW-0819">tRNA processing</keyword>
<evidence type="ECO:0000255" key="1">
    <source>
        <dbReference type="HAMAP-Rule" id="MF_00469"/>
    </source>
</evidence>
<name>TRHO_SHEB9</name>
<organism>
    <name type="scientific">Shewanella baltica (strain OS195)</name>
    <dbReference type="NCBI Taxonomy" id="399599"/>
    <lineage>
        <taxon>Bacteria</taxon>
        <taxon>Pseudomonadati</taxon>
        <taxon>Pseudomonadota</taxon>
        <taxon>Gammaproteobacteria</taxon>
        <taxon>Alteromonadales</taxon>
        <taxon>Shewanellaceae</taxon>
        <taxon>Shewanella</taxon>
    </lineage>
</organism>
<accession>A9L3N9</accession>
<feature type="chain" id="PRO_1000081196" description="tRNA uridine(34) hydroxylase">
    <location>
        <begin position="1"/>
        <end position="334"/>
    </location>
</feature>
<feature type="domain" description="Rhodanese" evidence="1">
    <location>
        <begin position="123"/>
        <end position="217"/>
    </location>
</feature>
<feature type="active site" description="Cysteine persulfide intermediate" evidence="1">
    <location>
        <position position="177"/>
    </location>
</feature>
<sequence>MTKVVVCALYKFVSLPHFESIRAPLLAMMEQAEIKGTLLLASEGINGTVAGTQEAIEALLVWLNSQNGLDNIVHKLSFDDEMPFYRTKVKLKNEIVTMGVEGIDPLKVVGTYVKPQDWNALISDPDVILVDTRNDYEVQIGTFKNAVNPVTETFREFPEYVKQNLDPAKHKKVAMFCTGGIRCEKSTAYLKEQGFDEVYHLEGGILKYLEEVKAEESLWEGECFVFDNRVAVNHDLKKGQYDQCNACRMPITEAEKQSPAYVQGVSCPHCIDKISDEQRKRFVERERQVNLAKARNEAHIGSDVNQVIEARREKKEAQRRLAAEKNNAKKSQVL</sequence>
<dbReference type="EC" id="1.14.-.-" evidence="1"/>
<dbReference type="EMBL" id="CP000891">
    <property type="protein sequence ID" value="ABX49649.1"/>
    <property type="molecule type" value="Genomic_DNA"/>
</dbReference>
<dbReference type="RefSeq" id="WP_012197232.1">
    <property type="nucleotide sequence ID" value="NC_009997.1"/>
</dbReference>
<dbReference type="SMR" id="A9L3N9"/>
<dbReference type="KEGG" id="sbn:Sbal195_2481"/>
<dbReference type="HOGENOM" id="CLU_038878_0_0_6"/>
<dbReference type="Proteomes" id="UP000000770">
    <property type="component" value="Chromosome"/>
</dbReference>
<dbReference type="GO" id="GO:0016705">
    <property type="term" value="F:oxidoreductase activity, acting on paired donors, with incorporation or reduction of molecular oxygen"/>
    <property type="evidence" value="ECO:0007669"/>
    <property type="project" value="UniProtKB-UniRule"/>
</dbReference>
<dbReference type="GO" id="GO:0006400">
    <property type="term" value="P:tRNA modification"/>
    <property type="evidence" value="ECO:0007669"/>
    <property type="project" value="UniProtKB-UniRule"/>
</dbReference>
<dbReference type="CDD" id="cd01518">
    <property type="entry name" value="RHOD_YceA"/>
    <property type="match status" value="1"/>
</dbReference>
<dbReference type="Gene3D" id="3.30.70.100">
    <property type="match status" value="1"/>
</dbReference>
<dbReference type="Gene3D" id="3.40.250.10">
    <property type="entry name" value="Rhodanese-like domain"/>
    <property type="match status" value="1"/>
</dbReference>
<dbReference type="HAMAP" id="MF_00469">
    <property type="entry name" value="TrhO"/>
    <property type="match status" value="1"/>
</dbReference>
<dbReference type="InterPro" id="IPR001763">
    <property type="entry name" value="Rhodanese-like_dom"/>
</dbReference>
<dbReference type="InterPro" id="IPR036873">
    <property type="entry name" value="Rhodanese-like_dom_sf"/>
</dbReference>
<dbReference type="InterPro" id="IPR020936">
    <property type="entry name" value="TrhO"/>
</dbReference>
<dbReference type="InterPro" id="IPR040503">
    <property type="entry name" value="TRHO_N"/>
</dbReference>
<dbReference type="NCBIfam" id="NF001136">
    <property type="entry name" value="PRK00142.1-4"/>
    <property type="match status" value="1"/>
</dbReference>
<dbReference type="PANTHER" id="PTHR43268:SF3">
    <property type="entry name" value="RHODANESE-LIKE DOMAIN-CONTAINING PROTEIN 7-RELATED"/>
    <property type="match status" value="1"/>
</dbReference>
<dbReference type="PANTHER" id="PTHR43268">
    <property type="entry name" value="THIOSULFATE SULFURTRANSFERASE/RHODANESE-LIKE DOMAIN-CONTAINING PROTEIN 2"/>
    <property type="match status" value="1"/>
</dbReference>
<dbReference type="Pfam" id="PF00581">
    <property type="entry name" value="Rhodanese"/>
    <property type="match status" value="1"/>
</dbReference>
<dbReference type="Pfam" id="PF17773">
    <property type="entry name" value="UPF0176_N"/>
    <property type="match status" value="1"/>
</dbReference>
<dbReference type="SMART" id="SM00450">
    <property type="entry name" value="RHOD"/>
    <property type="match status" value="1"/>
</dbReference>
<dbReference type="SUPFAM" id="SSF52821">
    <property type="entry name" value="Rhodanese/Cell cycle control phosphatase"/>
    <property type="match status" value="1"/>
</dbReference>
<dbReference type="PROSITE" id="PS50206">
    <property type="entry name" value="RHODANESE_3"/>
    <property type="match status" value="1"/>
</dbReference>
<comment type="function">
    <text evidence="1">Catalyzes oxygen-dependent 5-hydroxyuridine (ho5U) modification at position 34 in tRNAs.</text>
</comment>
<comment type="catalytic activity">
    <reaction evidence="1">
        <text>uridine(34) in tRNA + AH2 + O2 = 5-hydroxyuridine(34) in tRNA + A + H2O</text>
        <dbReference type="Rhea" id="RHEA:64224"/>
        <dbReference type="Rhea" id="RHEA-COMP:11727"/>
        <dbReference type="Rhea" id="RHEA-COMP:13381"/>
        <dbReference type="ChEBI" id="CHEBI:13193"/>
        <dbReference type="ChEBI" id="CHEBI:15377"/>
        <dbReference type="ChEBI" id="CHEBI:15379"/>
        <dbReference type="ChEBI" id="CHEBI:17499"/>
        <dbReference type="ChEBI" id="CHEBI:65315"/>
        <dbReference type="ChEBI" id="CHEBI:136877"/>
    </reaction>
</comment>
<comment type="similarity">
    <text evidence="1">Belongs to the TrhO family.</text>
</comment>
<protein>
    <recommendedName>
        <fullName evidence="1">tRNA uridine(34) hydroxylase</fullName>
        <ecNumber evidence="1">1.14.-.-</ecNumber>
    </recommendedName>
    <alternativeName>
        <fullName evidence="1">tRNA hydroxylation protein O</fullName>
    </alternativeName>
</protein>
<gene>
    <name evidence="1" type="primary">trhO</name>
    <name type="ordered locus">Sbal195_2481</name>
</gene>
<reference key="1">
    <citation type="submission" date="2007-11" db="EMBL/GenBank/DDBJ databases">
        <title>Complete sequence of chromosome of Shewanella baltica OS195.</title>
        <authorList>
            <consortium name="US DOE Joint Genome Institute"/>
            <person name="Copeland A."/>
            <person name="Lucas S."/>
            <person name="Lapidus A."/>
            <person name="Barry K."/>
            <person name="Glavina del Rio T."/>
            <person name="Dalin E."/>
            <person name="Tice H."/>
            <person name="Pitluck S."/>
            <person name="Chain P."/>
            <person name="Malfatti S."/>
            <person name="Shin M."/>
            <person name="Vergez L."/>
            <person name="Schmutz J."/>
            <person name="Larimer F."/>
            <person name="Land M."/>
            <person name="Hauser L."/>
            <person name="Kyrpides N."/>
            <person name="Kim E."/>
            <person name="Brettar I."/>
            <person name="Rodrigues J."/>
            <person name="Konstantinidis K."/>
            <person name="Klappenbach J."/>
            <person name="Hofle M."/>
            <person name="Tiedje J."/>
            <person name="Richardson P."/>
        </authorList>
    </citation>
    <scope>NUCLEOTIDE SEQUENCE [LARGE SCALE GENOMIC DNA]</scope>
    <source>
        <strain>OS195</strain>
    </source>
</reference>
<proteinExistence type="inferred from homology"/>